<sequence>MKGWNVIVIGGGHAGLEAAWAAAKFSRVALLVGNPATVGRMPCNPAVGGPGKSQLVFEVQALGGLMGRLADDTAIHTRMLNASKGPAVQSLRVQNERDAYAERAQDVIFGHSEIEIVRGEAADLEQDGQGGWVVVTSDGRRLHARSVVLAAGTFMRGVTWYGRQSRPEGRQGEPPSRFLSAPLERGGHVLKRYKTGTPPRVRADSVRFADLLEIPADPQPRGFTGTPGPRAAESPTWQTHTTPQTHALIQENLHESPMYAGDIEGLGPRYCPSIEDKVVKFAHHDRHLLFVEPDGVQTSEVYLQGFSSSLPPRLQDELVRTLPGFEQAVIQRYAYAVEYDVVDSTELTLNLESKKLPGLFTAGQLNGTSGYEEAAAQGLVAGTAAARRSLGLDEQVIGRETSYLGVLLDDLVFKGSDEPYRMMTSRVEHRLLVRQDNADERMTPIGHALGLVDDAELIRVQEKYARVQSGIKSLSKQRMQGQTADAWLRRPELSLADVETLGATLPAELGASEREAVEIRVKYAGYIARAESQLRSEAKARELSLSGVNFAGITALSNEAREKLTRLQPQTVEQASRISGVRHADISALLVHLKGQRVGS</sequence>
<protein>
    <recommendedName>
        <fullName evidence="1">tRNA uridine 5-carboxymethylaminomethyl modification enzyme MnmG</fullName>
    </recommendedName>
    <alternativeName>
        <fullName evidence="1">Glucose-inhibited division protein A</fullName>
    </alternativeName>
</protein>
<evidence type="ECO:0000255" key="1">
    <source>
        <dbReference type="HAMAP-Rule" id="MF_00129"/>
    </source>
</evidence>
<evidence type="ECO:0000256" key="2">
    <source>
        <dbReference type="SAM" id="MobiDB-lite"/>
    </source>
</evidence>
<proteinExistence type="inferred from homology"/>
<gene>
    <name evidence="1" type="primary">mnmG</name>
    <name evidence="1" type="synonym">gidA</name>
    <name type="ordered locus">DR_0027</name>
</gene>
<organism>
    <name type="scientific">Deinococcus radiodurans (strain ATCC 13939 / DSM 20539 / JCM 16871 / CCUG 27074 / LMG 4051 / NBRC 15346 / NCIMB 9279 / VKM B-1422 / R1)</name>
    <dbReference type="NCBI Taxonomy" id="243230"/>
    <lineage>
        <taxon>Bacteria</taxon>
        <taxon>Thermotogati</taxon>
        <taxon>Deinococcota</taxon>
        <taxon>Deinococci</taxon>
        <taxon>Deinococcales</taxon>
        <taxon>Deinococcaceae</taxon>
        <taxon>Deinococcus</taxon>
    </lineage>
</organism>
<keyword id="KW-0963">Cytoplasm</keyword>
<keyword id="KW-0274">FAD</keyword>
<keyword id="KW-0285">Flavoprotein</keyword>
<keyword id="KW-0520">NAD</keyword>
<keyword id="KW-1185">Reference proteome</keyword>
<keyword id="KW-0819">tRNA processing</keyword>
<name>MNMG_DEIRA</name>
<comment type="function">
    <text evidence="1">NAD-binding protein involved in the addition of a carboxymethylaminomethyl (cmnm) group at the wobble position (U34) of certain tRNAs, forming tRNA-cmnm(5)s(2)U34.</text>
</comment>
<comment type="cofactor">
    <cofactor evidence="1">
        <name>FAD</name>
        <dbReference type="ChEBI" id="CHEBI:57692"/>
    </cofactor>
</comment>
<comment type="subunit">
    <text evidence="1">Homodimer. Heterotetramer of two MnmE and two MnmG subunits.</text>
</comment>
<comment type="subcellular location">
    <subcellularLocation>
        <location evidence="1">Cytoplasm</location>
    </subcellularLocation>
</comment>
<comment type="similarity">
    <text evidence="1">Belongs to the MnmG family.</text>
</comment>
<feature type="chain" id="PRO_0000117092" description="tRNA uridine 5-carboxymethylaminomethyl modification enzyme MnmG">
    <location>
        <begin position="1"/>
        <end position="600"/>
    </location>
</feature>
<feature type="region of interest" description="Disordered" evidence="2">
    <location>
        <begin position="216"/>
        <end position="239"/>
    </location>
</feature>
<feature type="binding site" evidence="1">
    <location>
        <begin position="10"/>
        <end position="15"/>
    </location>
    <ligand>
        <name>FAD</name>
        <dbReference type="ChEBI" id="CHEBI:57692"/>
    </ligand>
</feature>
<feature type="binding site" evidence="1">
    <location>
        <begin position="267"/>
        <end position="281"/>
    </location>
    <ligand>
        <name>NAD(+)</name>
        <dbReference type="ChEBI" id="CHEBI:57540"/>
    </ligand>
</feature>
<dbReference type="EMBL" id="AE000513">
    <property type="protein sequence ID" value="AAF09619.1"/>
    <property type="molecule type" value="Genomic_DNA"/>
</dbReference>
<dbReference type="PIR" id="D75569">
    <property type="entry name" value="D75569"/>
</dbReference>
<dbReference type="RefSeq" id="NP_293753.1">
    <property type="nucleotide sequence ID" value="NC_001263.1"/>
</dbReference>
<dbReference type="RefSeq" id="WP_010886675.1">
    <property type="nucleotide sequence ID" value="NC_001263.1"/>
</dbReference>
<dbReference type="SMR" id="Q9RYC3"/>
<dbReference type="FunCoup" id="Q9RYC3">
    <property type="interactions" value="484"/>
</dbReference>
<dbReference type="STRING" id="243230.DR_0027"/>
<dbReference type="PaxDb" id="243230-DR_0027"/>
<dbReference type="EnsemblBacteria" id="AAF09619">
    <property type="protein sequence ID" value="AAF09619"/>
    <property type="gene ID" value="DR_0027"/>
</dbReference>
<dbReference type="GeneID" id="69516256"/>
<dbReference type="KEGG" id="dra:DR_0027"/>
<dbReference type="PATRIC" id="fig|243230.17.peg.192"/>
<dbReference type="eggNOG" id="COG0445">
    <property type="taxonomic scope" value="Bacteria"/>
</dbReference>
<dbReference type="HOGENOM" id="CLU_007831_2_2_0"/>
<dbReference type="InParanoid" id="Q9RYC3"/>
<dbReference type="OrthoDB" id="9815560at2"/>
<dbReference type="Proteomes" id="UP000002524">
    <property type="component" value="Chromosome 1"/>
</dbReference>
<dbReference type="GO" id="GO:0005829">
    <property type="term" value="C:cytosol"/>
    <property type="evidence" value="ECO:0000318"/>
    <property type="project" value="GO_Central"/>
</dbReference>
<dbReference type="GO" id="GO:0050660">
    <property type="term" value="F:flavin adenine dinucleotide binding"/>
    <property type="evidence" value="ECO:0000318"/>
    <property type="project" value="GO_Central"/>
</dbReference>
<dbReference type="GO" id="GO:0030488">
    <property type="term" value="P:tRNA methylation"/>
    <property type="evidence" value="ECO:0000318"/>
    <property type="project" value="GO_Central"/>
</dbReference>
<dbReference type="GO" id="GO:0002098">
    <property type="term" value="P:tRNA wobble uridine modification"/>
    <property type="evidence" value="ECO:0000318"/>
    <property type="project" value="GO_Central"/>
</dbReference>
<dbReference type="FunFam" id="1.10.150.570:FF:000001">
    <property type="entry name" value="tRNA uridine 5-carboxymethylaminomethyl modification enzyme MnmG"/>
    <property type="match status" value="1"/>
</dbReference>
<dbReference type="FunFam" id="3.50.50.60:FF:000585">
    <property type="entry name" value="tRNA uridine 5-carboxymethylaminomethyl modification enzyme MnmG"/>
    <property type="match status" value="1"/>
</dbReference>
<dbReference type="Gene3D" id="3.50.50.60">
    <property type="entry name" value="FAD/NAD(P)-binding domain"/>
    <property type="match status" value="2"/>
</dbReference>
<dbReference type="Gene3D" id="1.10.150.570">
    <property type="entry name" value="GidA associated domain, C-terminal subdomain"/>
    <property type="match status" value="1"/>
</dbReference>
<dbReference type="Gene3D" id="1.10.10.1800">
    <property type="entry name" value="tRNA uridine 5-carboxymethylaminomethyl modification enzyme MnmG/GidA"/>
    <property type="match status" value="1"/>
</dbReference>
<dbReference type="HAMAP" id="MF_00129">
    <property type="entry name" value="MnmG_GidA"/>
    <property type="match status" value="1"/>
</dbReference>
<dbReference type="InterPro" id="IPR036188">
    <property type="entry name" value="FAD/NAD-bd_sf"/>
</dbReference>
<dbReference type="InterPro" id="IPR049312">
    <property type="entry name" value="GIDA_C_N"/>
</dbReference>
<dbReference type="InterPro" id="IPR004416">
    <property type="entry name" value="MnmG"/>
</dbReference>
<dbReference type="InterPro" id="IPR002218">
    <property type="entry name" value="MnmG-rel"/>
</dbReference>
<dbReference type="InterPro" id="IPR020595">
    <property type="entry name" value="MnmG-rel_CS"/>
</dbReference>
<dbReference type="InterPro" id="IPR026904">
    <property type="entry name" value="MnmG_C"/>
</dbReference>
<dbReference type="InterPro" id="IPR047001">
    <property type="entry name" value="MnmG_C_subdom"/>
</dbReference>
<dbReference type="InterPro" id="IPR044920">
    <property type="entry name" value="MnmG_C_subdom_sf"/>
</dbReference>
<dbReference type="InterPro" id="IPR040131">
    <property type="entry name" value="MnmG_N"/>
</dbReference>
<dbReference type="NCBIfam" id="TIGR00136">
    <property type="entry name" value="mnmG_gidA"/>
    <property type="match status" value="1"/>
</dbReference>
<dbReference type="PANTHER" id="PTHR11806">
    <property type="entry name" value="GLUCOSE INHIBITED DIVISION PROTEIN A"/>
    <property type="match status" value="1"/>
</dbReference>
<dbReference type="PANTHER" id="PTHR11806:SF0">
    <property type="entry name" value="PROTEIN MTO1 HOMOLOG, MITOCHONDRIAL"/>
    <property type="match status" value="1"/>
</dbReference>
<dbReference type="Pfam" id="PF01134">
    <property type="entry name" value="GIDA"/>
    <property type="match status" value="1"/>
</dbReference>
<dbReference type="Pfam" id="PF21680">
    <property type="entry name" value="GIDA_C_1st"/>
    <property type="match status" value="1"/>
</dbReference>
<dbReference type="Pfam" id="PF13932">
    <property type="entry name" value="SAM_GIDA_C"/>
    <property type="match status" value="1"/>
</dbReference>
<dbReference type="SMART" id="SM01228">
    <property type="entry name" value="GIDA_assoc_3"/>
    <property type="match status" value="1"/>
</dbReference>
<dbReference type="SUPFAM" id="SSF51905">
    <property type="entry name" value="FAD/NAD(P)-binding domain"/>
    <property type="match status" value="1"/>
</dbReference>
<dbReference type="PROSITE" id="PS01280">
    <property type="entry name" value="GIDA_1"/>
    <property type="match status" value="1"/>
</dbReference>
<dbReference type="PROSITE" id="PS01281">
    <property type="entry name" value="GIDA_2"/>
    <property type="match status" value="1"/>
</dbReference>
<reference key="1">
    <citation type="journal article" date="1999" name="Science">
        <title>Genome sequence of the radioresistant bacterium Deinococcus radiodurans R1.</title>
        <authorList>
            <person name="White O."/>
            <person name="Eisen J.A."/>
            <person name="Heidelberg J.F."/>
            <person name="Hickey E.K."/>
            <person name="Peterson J.D."/>
            <person name="Dodson R.J."/>
            <person name="Haft D.H."/>
            <person name="Gwinn M.L."/>
            <person name="Nelson W.C."/>
            <person name="Richardson D.L."/>
            <person name="Moffat K.S."/>
            <person name="Qin H."/>
            <person name="Jiang L."/>
            <person name="Pamphile W."/>
            <person name="Crosby M."/>
            <person name="Shen M."/>
            <person name="Vamathevan J.J."/>
            <person name="Lam P."/>
            <person name="McDonald L.A."/>
            <person name="Utterback T.R."/>
            <person name="Zalewski C."/>
            <person name="Makarova K.S."/>
            <person name="Aravind L."/>
            <person name="Daly M.J."/>
            <person name="Minton K.W."/>
            <person name="Fleischmann R.D."/>
            <person name="Ketchum K.A."/>
            <person name="Nelson K.E."/>
            <person name="Salzberg S.L."/>
            <person name="Smith H.O."/>
            <person name="Venter J.C."/>
            <person name="Fraser C.M."/>
        </authorList>
    </citation>
    <scope>NUCLEOTIDE SEQUENCE [LARGE SCALE GENOMIC DNA]</scope>
    <source>
        <strain>ATCC 13939 / DSM 20539 / JCM 16871 / CCUG 27074 / LMG 4051 / NBRC 15346 / NCIMB 9279 / VKM B-1422 / R1</strain>
    </source>
</reference>
<accession>Q9RYC3</accession>